<comment type="function">
    <text evidence="2 4">Involved in the catabolism of short chain fatty acids (SCFA) via the tricarboxylic acid (TCA)(acetyl degradation route) and via the 2-methylcitrate cycle I (propionate degradation route). Catalyzes the Claisen condensation of propionyl-CoA and oxaloacetate (OAA) to yield 2-methylcitrate (2-MC) and CoA. Also catalyzes the condensation of oxaloacetate with acetyl-CoA but with a lower specificity.</text>
</comment>
<comment type="catalytic activity">
    <reaction evidence="4">
        <text>propanoyl-CoA + oxaloacetate + H2O = (2S,3S)-2-methylcitrate + CoA + H(+)</text>
        <dbReference type="Rhea" id="RHEA:23780"/>
        <dbReference type="ChEBI" id="CHEBI:15377"/>
        <dbReference type="ChEBI" id="CHEBI:15378"/>
        <dbReference type="ChEBI" id="CHEBI:16452"/>
        <dbReference type="ChEBI" id="CHEBI:57287"/>
        <dbReference type="ChEBI" id="CHEBI:57392"/>
        <dbReference type="ChEBI" id="CHEBI:58853"/>
        <dbReference type="EC" id="2.3.3.5"/>
    </reaction>
</comment>
<comment type="catalytic activity">
    <reaction evidence="2 4">
        <text>oxaloacetate + acetyl-CoA + H2O = citrate + CoA + H(+)</text>
        <dbReference type="Rhea" id="RHEA:16845"/>
        <dbReference type="ChEBI" id="CHEBI:15377"/>
        <dbReference type="ChEBI" id="CHEBI:15378"/>
        <dbReference type="ChEBI" id="CHEBI:16452"/>
        <dbReference type="ChEBI" id="CHEBI:16947"/>
        <dbReference type="ChEBI" id="CHEBI:57287"/>
        <dbReference type="ChEBI" id="CHEBI:57288"/>
        <dbReference type="EC" id="2.3.3.16"/>
    </reaction>
</comment>
<comment type="biophysicochemical properties">
    <kinetics>
        <KM evidence="4">3 uM for oxaloacetate (with propionyl-CoA at pH 8 and 23 degrees Celsius)</KM>
        <KM evidence="2">6.9 uM for oxaloacetate (with acetyl-CoA at pH 8 and 23 degrees Celsius)</KM>
        <KM evidence="4">7 uM for oxaloacetate (with acetyl-CoA at pH 8 and 23 degrees Celsius)</KM>
        <KM evidence="4">16 uM for propionyl-CoA (at pH 8 and 23 degrees Celsius)</KM>
        <KM evidence="4">229 uM for acetyl-CoA (at pH 8 and 23 degrees Celsius)</KM>
        <KM evidence="2">230 uM for acetyl-CoA (at pH 8 and 23 degrees Celsius)</KM>
        <Vmax evidence="4">12.0 umol/min/mg enzyme with propionyl-CoA as substrate (at pH 8 and 23 degrees Celsius)</Vmax>
        <Vmax evidence="2 4">30.0 umol/min/mg enzyme with acetyl-CoA as substrate (at pH 8 and 23 degrees Celsius)</Vmax>
        <text evidence="2 4">kcat is 8 sec(-1) for 2-methylcitrate synthase activity with propionyl-CoA as substrate (at pH 8 and 23 degrees Celsius). kcat is 21 sec(-1) for citrate synthase activity with acetyl-CoA as substrate (at pH 8 and 23 degrees Celsius).</text>
    </kinetics>
    <temperatureDependence>
        <text evidence="2">Optimum temperature is 31 degrees Celsius. Cold-active. Is rapidly inactivated at 45 degrees Celsius, and shows significant activity at 10 degrees Celsius and below.</text>
    </temperatureDependence>
</comment>
<comment type="pathway">
    <text evidence="8">Organic acid metabolism; propanoate degradation.</text>
</comment>
<comment type="pathway">
    <text evidence="8">Carbohydrate metabolism; tricarboxylic acid cycle; isocitrate from oxaloacetate: step 1/2.</text>
</comment>
<comment type="subunit">
    <text evidence="2 3">Homodimer.</text>
</comment>
<comment type="induction">
    <text evidence="4">By growth on propionate, but not acetate or glucose.</text>
</comment>
<comment type="similarity">
    <text evidence="7">Belongs to the citrate synthase family.</text>
</comment>
<sequence length="379" mass="41832">MTEPTIHKGLAGVTADVTAISKVNSDTNSLLYRGYPVQELAAKCSFEQVAYLLWNSELPNDSELKAFVNFERSHRKLDENVKGAIDLLSTACHPMDVARTAVSVLGANHARAQDSSPEANLEKAMSLLATFPSVVAYDQRRRRGEELIEPREDLDYSANFLWMTFGEEAAPEVVEAFNVSMILYAEHSFNASTFTARVITSTLADLHSAVTGAIGALKGPLHGGANEAVMHTFEEIGIRKDESLDEAATRSKAWMVDALAQKKKVMGFGHRVYKNGDSRVPTMKSALDAMIKHYDRPEMLGLYNGLEAAMEEAKQIKPNLDYPAGPTYNLMGFDTEMFTPLFIAARITGWTAHIMEQVADNALIRPLSEYNGPEQRQVP</sequence>
<keyword id="KW-0002">3D-structure</keyword>
<keyword id="KW-0903">Direct protein sequencing</keyword>
<keyword id="KW-0808">Transferase</keyword>
<keyword id="KW-0816">Tricarboxylic acid cycle</keyword>
<name>PRPC_ABDS2</name>
<protein>
    <recommendedName>
        <fullName evidence="6">2-methylcitrate synthase</fullName>
        <shortName evidence="6">2-MCS</shortName>
        <shortName evidence="6">MCS</shortName>
        <ecNumber evidence="4">2.3.3.5</ecNumber>
    </recommendedName>
    <alternativeName>
        <fullName evidence="5">Citrate synthase</fullName>
        <ecNumber evidence="2 4">2.3.3.16</ecNumber>
    </alternativeName>
</protein>
<evidence type="ECO:0000250" key="1">
    <source>
        <dbReference type="UniProtKB" id="I6Y9Q3"/>
    </source>
</evidence>
<evidence type="ECO:0000269" key="2">
    <source>
    </source>
</evidence>
<evidence type="ECO:0000269" key="3">
    <source>
    </source>
</evidence>
<evidence type="ECO:0000269" key="4">
    <source>
    </source>
</evidence>
<evidence type="ECO:0000303" key="5">
    <source>
    </source>
</evidence>
<evidence type="ECO:0000303" key="6">
    <source>
    </source>
</evidence>
<evidence type="ECO:0000305" key="7"/>
<evidence type="ECO:0000305" key="8">
    <source>
    </source>
</evidence>
<evidence type="ECO:0007829" key="9">
    <source>
        <dbReference type="PDB" id="1A59"/>
    </source>
</evidence>
<organism>
    <name type="scientific">Antarctic bacterium DS2-3R</name>
    <dbReference type="NCBI Taxonomy" id="56673"/>
    <lineage>
        <taxon>Bacteria</taxon>
    </lineage>
</organism>
<reference key="1">
    <citation type="journal article" date="1997" name="Eur. J. Biochem.">
        <title>Sequencing and expression of the gene encoding a cold-active citrate synthase from an Antarctic bacterium, strain DS2-3R.</title>
        <authorList>
            <person name="Gerike U."/>
            <person name="Danson M.J."/>
            <person name="Russell N.J."/>
            <person name="Hough D.W."/>
        </authorList>
    </citation>
    <scope>NUCLEOTIDE SEQUENCE [GENOMIC DNA]</scope>
    <scope>PROTEIN SEQUENCE OF 2-16</scope>
    <scope>FUNCTION</scope>
    <scope>CATALYTIC ACTIVITY</scope>
    <scope>BIOPHYSICOCHEMICAL PROPERTIES</scope>
    <scope>SUBUNIT</scope>
    <source>
        <strain>DS2-3R</strain>
    </source>
</reference>
<reference key="2">
    <citation type="journal article" date="1998" name="Microbiology">
        <title>Citrate synthase and 2-methylcitrate synthase: structural, functional and evolutionary relationships.</title>
        <authorList>
            <person name="Gerike U."/>
            <person name="Hough D.W."/>
            <person name="Russell N.J."/>
            <person name="Dyall-Smith M.L."/>
            <person name="Danson M.J."/>
        </authorList>
    </citation>
    <scope>FUNCTION</scope>
    <scope>CATALYTIC ACTIVITY</scope>
    <scope>BIOPHYSICOCHEMICAL PROPERTIES</scope>
    <scope>INDUCTION</scope>
    <scope>SUBSTRATE SPECIFICITY</scope>
    <source>
        <strain>DS2-3R</strain>
    </source>
</reference>
<reference key="3">
    <citation type="journal article" date="1998" name="Structure">
        <title>Structural adaptations of the cold-active citrate synthase from an Antarctic bacterium.</title>
        <authorList>
            <person name="Russell R.J."/>
            <person name="Gerike U."/>
            <person name="Danson M.J."/>
            <person name="Hough D.W."/>
            <person name="Taylor G.L."/>
        </authorList>
    </citation>
    <scope>X-RAY CRYSTALLOGRAPHY (2.09 ANGSTROMS) OF 2-379 IN COMPLEX WITH COENZYME A AND SUBSTRATE</scope>
    <scope>ACTIVE SITE</scope>
    <scope>SUBUNIT</scope>
    <source>
        <strain>DS2-3R</strain>
    </source>
</reference>
<dbReference type="EC" id="2.3.3.5" evidence="4"/>
<dbReference type="EC" id="2.3.3.16" evidence="2 4"/>
<dbReference type="EMBL" id="U85944">
    <property type="protein sequence ID" value="AAC45662.1"/>
    <property type="molecule type" value="Genomic_DNA"/>
</dbReference>
<dbReference type="PDB" id="1A59">
    <property type="method" value="X-ray"/>
    <property type="resolution" value="2.09 A"/>
    <property type="chains" value="A=2-379"/>
</dbReference>
<dbReference type="PDBsum" id="1A59"/>
<dbReference type="SMR" id="O34002"/>
<dbReference type="DrugBank" id="DB04272">
    <property type="generic name" value="Citric acid"/>
</dbReference>
<dbReference type="DrugBank" id="DB01992">
    <property type="generic name" value="Coenzyme A"/>
</dbReference>
<dbReference type="BRENDA" id="2.3.3.1">
    <property type="organism ID" value="15675"/>
</dbReference>
<dbReference type="SABIO-RK" id="O34002"/>
<dbReference type="UniPathway" id="UPA00223">
    <property type="reaction ID" value="UER00717"/>
</dbReference>
<dbReference type="UniPathway" id="UPA00946"/>
<dbReference type="EvolutionaryTrace" id="O34002"/>
<dbReference type="GO" id="GO:0005829">
    <property type="term" value="C:cytosol"/>
    <property type="evidence" value="ECO:0007669"/>
    <property type="project" value="TreeGrafter"/>
</dbReference>
<dbReference type="GO" id="GO:0050440">
    <property type="term" value="F:2-methylcitrate synthase activity"/>
    <property type="evidence" value="ECO:0000314"/>
    <property type="project" value="UniProtKB"/>
</dbReference>
<dbReference type="GO" id="GO:0004108">
    <property type="term" value="F:citrate (Si)-synthase activity"/>
    <property type="evidence" value="ECO:0007669"/>
    <property type="project" value="TreeGrafter"/>
</dbReference>
<dbReference type="GO" id="GO:0036440">
    <property type="term" value="F:citrate synthase activity"/>
    <property type="evidence" value="ECO:0000314"/>
    <property type="project" value="UniProtKB"/>
</dbReference>
<dbReference type="GO" id="GO:0005975">
    <property type="term" value="P:carbohydrate metabolic process"/>
    <property type="evidence" value="ECO:0007669"/>
    <property type="project" value="TreeGrafter"/>
</dbReference>
<dbReference type="GO" id="GO:0019679">
    <property type="term" value="P:propionate metabolic process, methylcitrate cycle"/>
    <property type="evidence" value="ECO:0000314"/>
    <property type="project" value="UniProtKB"/>
</dbReference>
<dbReference type="GO" id="GO:0006099">
    <property type="term" value="P:tricarboxylic acid cycle"/>
    <property type="evidence" value="ECO:0007669"/>
    <property type="project" value="UniProtKB-UniPathway"/>
</dbReference>
<dbReference type="CDD" id="cd06111">
    <property type="entry name" value="DsCS_like"/>
    <property type="match status" value="1"/>
</dbReference>
<dbReference type="Gene3D" id="1.10.580.10">
    <property type="entry name" value="Citrate Synthase, domain 1"/>
    <property type="match status" value="1"/>
</dbReference>
<dbReference type="Gene3D" id="1.10.230.10">
    <property type="entry name" value="Cytochrome P450-Terp, domain 2"/>
    <property type="match status" value="1"/>
</dbReference>
<dbReference type="InterPro" id="IPR011278">
    <property type="entry name" value="2-MeCitrate/Citrate_synth_II"/>
</dbReference>
<dbReference type="InterPro" id="IPR016142">
    <property type="entry name" value="Citrate_synth-like_lrg_a-sub"/>
</dbReference>
<dbReference type="InterPro" id="IPR016143">
    <property type="entry name" value="Citrate_synth-like_sm_a-sub"/>
</dbReference>
<dbReference type="InterPro" id="IPR002020">
    <property type="entry name" value="Citrate_synthase"/>
</dbReference>
<dbReference type="InterPro" id="IPR019810">
    <property type="entry name" value="Citrate_synthase_AS"/>
</dbReference>
<dbReference type="InterPro" id="IPR024176">
    <property type="entry name" value="Citrate_synthase_bac-typ"/>
</dbReference>
<dbReference type="InterPro" id="IPR036969">
    <property type="entry name" value="Citrate_synthase_sf"/>
</dbReference>
<dbReference type="NCBIfam" id="TIGR01800">
    <property type="entry name" value="cit_synth_II"/>
    <property type="match status" value="1"/>
</dbReference>
<dbReference type="NCBIfam" id="NF010636">
    <property type="entry name" value="PRK14033.1"/>
    <property type="match status" value="1"/>
</dbReference>
<dbReference type="PANTHER" id="PTHR11739">
    <property type="entry name" value="CITRATE SYNTHASE"/>
    <property type="match status" value="1"/>
</dbReference>
<dbReference type="PANTHER" id="PTHR11739:SF4">
    <property type="entry name" value="CITRATE SYNTHASE, PEROXISOMAL"/>
    <property type="match status" value="1"/>
</dbReference>
<dbReference type="Pfam" id="PF00285">
    <property type="entry name" value="Citrate_synt"/>
    <property type="match status" value="1"/>
</dbReference>
<dbReference type="PIRSF" id="PIRSF001369">
    <property type="entry name" value="Citrate_synth"/>
    <property type="match status" value="1"/>
</dbReference>
<dbReference type="PRINTS" id="PR00143">
    <property type="entry name" value="CITRTSNTHASE"/>
</dbReference>
<dbReference type="SUPFAM" id="SSF48256">
    <property type="entry name" value="Citrate synthase"/>
    <property type="match status" value="1"/>
</dbReference>
<dbReference type="PROSITE" id="PS00480">
    <property type="entry name" value="CITRATE_SYNTHASE"/>
    <property type="match status" value="1"/>
</dbReference>
<feature type="initiator methionine" description="Removed" evidence="2">
    <location>
        <position position="1"/>
    </location>
</feature>
<feature type="chain" id="PRO_0000169925" description="2-methylcitrate synthase">
    <location>
        <begin position="2"/>
        <end position="379"/>
    </location>
</feature>
<feature type="active site" evidence="3">
    <location>
        <position position="222"/>
    </location>
</feature>
<feature type="active site" evidence="3">
    <location>
        <position position="270"/>
    </location>
</feature>
<feature type="active site" evidence="3">
    <location>
        <position position="321"/>
    </location>
</feature>
<feature type="binding site" evidence="1">
    <location>
        <position position="187"/>
    </location>
    <ligand>
        <name>substrate</name>
    </ligand>
</feature>
<feature type="binding site" evidence="3">
    <location>
        <begin position="264"/>
        <end position="268"/>
    </location>
    <ligand>
        <name>CoA</name>
        <dbReference type="ChEBI" id="CHEBI:57287"/>
    </ligand>
</feature>
<feature type="binding site" evidence="3">
    <location>
        <position position="279"/>
    </location>
    <ligand>
        <name>substrate</name>
    </ligand>
</feature>
<feature type="binding site" evidence="3">
    <location>
        <position position="346"/>
    </location>
    <ligand>
        <name>substrate</name>
    </ligand>
</feature>
<feature type="binding site" evidence="1">
    <location>
        <position position="365"/>
    </location>
    <ligand>
        <name>substrate</name>
    </ligand>
</feature>
<feature type="helix" evidence="9">
    <location>
        <begin position="8"/>
        <end position="10"/>
    </location>
</feature>
<feature type="strand" evidence="9">
    <location>
        <begin position="19"/>
        <end position="24"/>
    </location>
</feature>
<feature type="turn" evidence="9">
    <location>
        <begin position="25"/>
        <end position="28"/>
    </location>
</feature>
<feature type="strand" evidence="9">
    <location>
        <begin position="29"/>
        <end position="32"/>
    </location>
</feature>
<feature type="helix" evidence="9">
    <location>
        <begin position="37"/>
        <end position="43"/>
    </location>
</feature>
<feature type="helix" evidence="9">
    <location>
        <begin position="46"/>
        <end position="55"/>
    </location>
</feature>
<feature type="helix" evidence="9">
    <location>
        <begin position="61"/>
        <end position="72"/>
    </location>
</feature>
<feature type="helix" evidence="9">
    <location>
        <begin position="79"/>
        <end position="85"/>
    </location>
</feature>
<feature type="helix" evidence="9">
    <location>
        <begin position="94"/>
        <end position="107"/>
    </location>
</feature>
<feature type="turn" evidence="9">
    <location>
        <begin position="110"/>
        <end position="113"/>
    </location>
</feature>
<feature type="helix" evidence="9">
    <location>
        <begin position="117"/>
        <end position="142"/>
    </location>
</feature>
<feature type="helix" evidence="9">
    <location>
        <begin position="156"/>
        <end position="165"/>
    </location>
</feature>
<feature type="helix" evidence="9">
    <location>
        <begin position="171"/>
        <end position="184"/>
    </location>
</feature>
<feature type="helix" evidence="9">
    <location>
        <begin position="191"/>
        <end position="200"/>
    </location>
</feature>
<feature type="turn" evidence="9">
    <location>
        <begin position="201"/>
        <end position="203"/>
    </location>
</feature>
<feature type="helix" evidence="9">
    <location>
        <begin position="206"/>
        <end position="218"/>
    </location>
</feature>
<feature type="turn" evidence="9">
    <location>
        <begin position="220"/>
        <end position="224"/>
    </location>
</feature>
<feature type="helix" evidence="9">
    <location>
        <begin position="225"/>
        <end position="235"/>
    </location>
</feature>
<feature type="helix" evidence="9">
    <location>
        <begin position="244"/>
        <end position="260"/>
    </location>
</feature>
<feature type="helix" evidence="9">
    <location>
        <begin position="280"/>
        <end position="293"/>
    </location>
</feature>
<feature type="helix" evidence="9">
    <location>
        <begin position="298"/>
        <end position="314"/>
    </location>
</feature>
<feature type="helix" evidence="9">
    <location>
        <begin position="321"/>
        <end position="330"/>
    </location>
</feature>
<feature type="helix" evidence="9">
    <location>
        <begin position="335"/>
        <end position="337"/>
    </location>
</feature>
<feature type="helix" evidence="9">
    <location>
        <begin position="338"/>
        <end position="359"/>
    </location>
</feature>
<proteinExistence type="evidence at protein level"/>
<gene>
    <name type="primary">gltA</name>
    <name type="synonym">cisY</name>
</gene>
<accession>O34002</accession>